<gene>
    <name evidence="1" type="primary">trhO</name>
    <name type="ordered locus">SPCG_0090</name>
</gene>
<organism>
    <name type="scientific">Streptococcus pneumoniae (strain CGSP14)</name>
    <dbReference type="NCBI Taxonomy" id="516950"/>
    <lineage>
        <taxon>Bacteria</taxon>
        <taxon>Bacillati</taxon>
        <taxon>Bacillota</taxon>
        <taxon>Bacilli</taxon>
        <taxon>Lactobacillales</taxon>
        <taxon>Streptococcaceae</taxon>
        <taxon>Streptococcus</taxon>
    </lineage>
</organism>
<name>TRHO_STRPS</name>
<sequence length="328" mass="37906">MAKDIRVLLYYLYTPIENAEQFAADHLAFCKSIGLKGRILVADEGINGTVSGDYETTQKYMDYVHSLPGMEELWFKIDEENEQAFKKMFVRYKKEIVHLGLEDNDFDNDINPLETTGAYLSPKEFKEALLDKDTVVLDTRNDYEYDLGHFRGAIRPDIRNFRELPQWVRDNKEKFMDKRVVVYCTGGVRCEKFSGWMVREGYKDVGQLHGGIATYGKDPEVQGELWDGKMYVFDERIAVDVNHVNPTIVGKDWFDGTPCERYVNCGNPFCNRRILTSEENEDKYLRGCSHECRVHPRNRYVSKNELTQAEVIERLAAIGESLDQAATV</sequence>
<comment type="function">
    <text evidence="1">Catalyzes oxygen-dependent 5-hydroxyuridine (ho5U) modification at position 34 in tRNAs.</text>
</comment>
<comment type="catalytic activity">
    <reaction evidence="1">
        <text>uridine(34) in tRNA + AH2 + O2 = 5-hydroxyuridine(34) in tRNA + A + H2O</text>
        <dbReference type="Rhea" id="RHEA:64224"/>
        <dbReference type="Rhea" id="RHEA-COMP:11727"/>
        <dbReference type="Rhea" id="RHEA-COMP:13381"/>
        <dbReference type="ChEBI" id="CHEBI:13193"/>
        <dbReference type="ChEBI" id="CHEBI:15377"/>
        <dbReference type="ChEBI" id="CHEBI:15379"/>
        <dbReference type="ChEBI" id="CHEBI:17499"/>
        <dbReference type="ChEBI" id="CHEBI:65315"/>
        <dbReference type="ChEBI" id="CHEBI:136877"/>
    </reaction>
</comment>
<comment type="similarity">
    <text evidence="1">Belongs to the TrhO family.</text>
</comment>
<proteinExistence type="inferred from homology"/>
<dbReference type="EC" id="1.14.-.-" evidence="1"/>
<dbReference type="EMBL" id="CP001033">
    <property type="protein sequence ID" value="ACB89342.1"/>
    <property type="molecule type" value="Genomic_DNA"/>
</dbReference>
<dbReference type="RefSeq" id="WP_001030031.1">
    <property type="nucleotide sequence ID" value="NC_010582.1"/>
</dbReference>
<dbReference type="SMR" id="B2IRH1"/>
<dbReference type="KEGG" id="spw:SPCG_0090"/>
<dbReference type="HOGENOM" id="CLU_038878_1_0_9"/>
<dbReference type="GO" id="GO:0016705">
    <property type="term" value="F:oxidoreductase activity, acting on paired donors, with incorporation or reduction of molecular oxygen"/>
    <property type="evidence" value="ECO:0007669"/>
    <property type="project" value="UniProtKB-UniRule"/>
</dbReference>
<dbReference type="GO" id="GO:0006400">
    <property type="term" value="P:tRNA modification"/>
    <property type="evidence" value="ECO:0007669"/>
    <property type="project" value="UniProtKB-UniRule"/>
</dbReference>
<dbReference type="CDD" id="cd01518">
    <property type="entry name" value="RHOD_YceA"/>
    <property type="match status" value="1"/>
</dbReference>
<dbReference type="Gene3D" id="3.30.70.100">
    <property type="match status" value="1"/>
</dbReference>
<dbReference type="Gene3D" id="3.40.250.10">
    <property type="entry name" value="Rhodanese-like domain"/>
    <property type="match status" value="1"/>
</dbReference>
<dbReference type="HAMAP" id="MF_00469">
    <property type="entry name" value="TrhO"/>
    <property type="match status" value="1"/>
</dbReference>
<dbReference type="InterPro" id="IPR001763">
    <property type="entry name" value="Rhodanese-like_dom"/>
</dbReference>
<dbReference type="InterPro" id="IPR036873">
    <property type="entry name" value="Rhodanese-like_dom_sf"/>
</dbReference>
<dbReference type="InterPro" id="IPR022111">
    <property type="entry name" value="Rhodanese_C"/>
</dbReference>
<dbReference type="InterPro" id="IPR020936">
    <property type="entry name" value="TrhO"/>
</dbReference>
<dbReference type="InterPro" id="IPR040503">
    <property type="entry name" value="TRHO_N"/>
</dbReference>
<dbReference type="NCBIfam" id="NF001135">
    <property type="entry name" value="PRK00142.1-3"/>
    <property type="match status" value="1"/>
</dbReference>
<dbReference type="NCBIfam" id="NF001137">
    <property type="entry name" value="PRK00142.1-5"/>
    <property type="match status" value="1"/>
</dbReference>
<dbReference type="PANTHER" id="PTHR43268:SF3">
    <property type="entry name" value="RHODANESE-LIKE DOMAIN-CONTAINING PROTEIN 7-RELATED"/>
    <property type="match status" value="1"/>
</dbReference>
<dbReference type="PANTHER" id="PTHR43268">
    <property type="entry name" value="THIOSULFATE SULFURTRANSFERASE/RHODANESE-LIKE DOMAIN-CONTAINING PROTEIN 2"/>
    <property type="match status" value="1"/>
</dbReference>
<dbReference type="Pfam" id="PF00581">
    <property type="entry name" value="Rhodanese"/>
    <property type="match status" value="1"/>
</dbReference>
<dbReference type="Pfam" id="PF12368">
    <property type="entry name" value="Rhodanese_C"/>
    <property type="match status" value="1"/>
</dbReference>
<dbReference type="Pfam" id="PF17773">
    <property type="entry name" value="UPF0176_N"/>
    <property type="match status" value="1"/>
</dbReference>
<dbReference type="SMART" id="SM00450">
    <property type="entry name" value="RHOD"/>
    <property type="match status" value="1"/>
</dbReference>
<dbReference type="SUPFAM" id="SSF52821">
    <property type="entry name" value="Rhodanese/Cell cycle control phosphatase"/>
    <property type="match status" value="1"/>
</dbReference>
<dbReference type="PROSITE" id="PS50206">
    <property type="entry name" value="RHODANESE_3"/>
    <property type="match status" value="1"/>
</dbReference>
<keyword id="KW-0560">Oxidoreductase</keyword>
<keyword id="KW-0819">tRNA processing</keyword>
<accession>B2IRH1</accession>
<evidence type="ECO:0000255" key="1">
    <source>
        <dbReference type="HAMAP-Rule" id="MF_00469"/>
    </source>
</evidence>
<protein>
    <recommendedName>
        <fullName evidence="1">tRNA uridine(34) hydroxylase</fullName>
        <ecNumber evidence="1">1.14.-.-</ecNumber>
    </recommendedName>
    <alternativeName>
        <fullName evidence="1">tRNA hydroxylation protein O</fullName>
    </alternativeName>
</protein>
<feature type="chain" id="PRO_1000200381" description="tRNA uridine(34) hydroxylase">
    <location>
        <begin position="1"/>
        <end position="328"/>
    </location>
</feature>
<feature type="domain" description="Rhodanese" evidence="1">
    <location>
        <begin position="130"/>
        <end position="224"/>
    </location>
</feature>
<feature type="active site" description="Cysteine persulfide intermediate" evidence="1">
    <location>
        <position position="184"/>
    </location>
</feature>
<reference key="1">
    <citation type="journal article" date="2009" name="BMC Genomics">
        <title>Genome evolution driven by host adaptations results in a more virulent and antimicrobial-resistant Streptococcus pneumoniae serotype 14.</title>
        <authorList>
            <person name="Ding F."/>
            <person name="Tang P."/>
            <person name="Hsu M.-H."/>
            <person name="Cui P."/>
            <person name="Hu S."/>
            <person name="Yu J."/>
            <person name="Chiu C.-H."/>
        </authorList>
    </citation>
    <scope>NUCLEOTIDE SEQUENCE [LARGE SCALE GENOMIC DNA]</scope>
    <source>
        <strain>CGSP14</strain>
    </source>
</reference>